<organism>
    <name type="scientific">Streptococcus pneumoniae (strain JJA)</name>
    <dbReference type="NCBI Taxonomy" id="488222"/>
    <lineage>
        <taxon>Bacteria</taxon>
        <taxon>Bacillati</taxon>
        <taxon>Bacillota</taxon>
        <taxon>Bacilli</taxon>
        <taxon>Lactobacillales</taxon>
        <taxon>Streptococcaceae</taxon>
        <taxon>Streptococcus</taxon>
    </lineage>
</organism>
<evidence type="ECO:0000255" key="1">
    <source>
        <dbReference type="HAMAP-Rule" id="MF_00228"/>
    </source>
</evidence>
<sequence>MQEFTNPFPIGSSSLIHCMTNEISCEMLANGILALGCKPVMADDPREVLDFTKQSQALFINLGHLSAEKEKAIRIAASYAAQVCLPMVVDAVGVTASSIRKSLVRDLLDYRPTVLKGNMSEIRSLVGLKHHGVGVDASAKDQETEDLLQVLKDWCQTYHGMSFLVTGPKDLVVSKNQVAVLGNGCAELDWITGTGDLVGALTAVFLSQGKTGFEASCLAVSYLNIAAEKIVVQGMGLEEFRYQVLNQLSLLRRDENWLDTIKGEVYE</sequence>
<reference key="1">
    <citation type="journal article" date="2010" name="Genome Biol.">
        <title>Structure and dynamics of the pan-genome of Streptococcus pneumoniae and closely related species.</title>
        <authorList>
            <person name="Donati C."/>
            <person name="Hiller N.L."/>
            <person name="Tettelin H."/>
            <person name="Muzzi A."/>
            <person name="Croucher N.J."/>
            <person name="Angiuoli S.V."/>
            <person name="Oggioni M."/>
            <person name="Dunning Hotopp J.C."/>
            <person name="Hu F.Z."/>
            <person name="Riley D.R."/>
            <person name="Covacci A."/>
            <person name="Mitchell T.J."/>
            <person name="Bentley S.D."/>
            <person name="Kilian M."/>
            <person name="Ehrlich G.D."/>
            <person name="Rappuoli R."/>
            <person name="Moxon E.R."/>
            <person name="Masignani V."/>
        </authorList>
    </citation>
    <scope>NUCLEOTIDE SEQUENCE [LARGE SCALE GENOMIC DNA]</scope>
    <source>
        <strain>JJA</strain>
    </source>
</reference>
<feature type="chain" id="PRO_0000383903" description="Hydroxyethylthiazole kinase 2">
    <location>
        <begin position="1"/>
        <end position="267"/>
    </location>
</feature>
<feature type="binding site" evidence="1">
    <location>
        <position position="41"/>
    </location>
    <ligand>
        <name>substrate</name>
    </ligand>
</feature>
<feature type="binding site" evidence="1">
    <location>
        <position position="116"/>
    </location>
    <ligand>
        <name>ATP</name>
        <dbReference type="ChEBI" id="CHEBI:30616"/>
    </ligand>
</feature>
<feature type="binding site" evidence="1">
    <location>
        <position position="166"/>
    </location>
    <ligand>
        <name>ATP</name>
        <dbReference type="ChEBI" id="CHEBI:30616"/>
    </ligand>
</feature>
<feature type="binding site" evidence="1">
    <location>
        <position position="193"/>
    </location>
    <ligand>
        <name>substrate</name>
    </ligand>
</feature>
<accession>C1CD76</accession>
<dbReference type="EC" id="2.7.1.50" evidence="1"/>
<dbReference type="EMBL" id="CP000919">
    <property type="protein sequence ID" value="ACO18460.1"/>
    <property type="molecule type" value="Genomic_DNA"/>
</dbReference>
<dbReference type="RefSeq" id="WP_001155186.1">
    <property type="nucleotide sequence ID" value="NC_012466.1"/>
</dbReference>
<dbReference type="SMR" id="C1CD76"/>
<dbReference type="KEGG" id="sjj:SPJ_0664"/>
<dbReference type="HOGENOM" id="CLU_019943_0_0_9"/>
<dbReference type="UniPathway" id="UPA00060">
    <property type="reaction ID" value="UER00139"/>
</dbReference>
<dbReference type="Proteomes" id="UP000002206">
    <property type="component" value="Chromosome"/>
</dbReference>
<dbReference type="GO" id="GO:0005524">
    <property type="term" value="F:ATP binding"/>
    <property type="evidence" value="ECO:0007669"/>
    <property type="project" value="UniProtKB-UniRule"/>
</dbReference>
<dbReference type="GO" id="GO:0004417">
    <property type="term" value="F:hydroxyethylthiazole kinase activity"/>
    <property type="evidence" value="ECO:0007669"/>
    <property type="project" value="UniProtKB-UniRule"/>
</dbReference>
<dbReference type="GO" id="GO:0000287">
    <property type="term" value="F:magnesium ion binding"/>
    <property type="evidence" value="ECO:0007669"/>
    <property type="project" value="UniProtKB-UniRule"/>
</dbReference>
<dbReference type="GO" id="GO:0009228">
    <property type="term" value="P:thiamine biosynthetic process"/>
    <property type="evidence" value="ECO:0007669"/>
    <property type="project" value="UniProtKB-KW"/>
</dbReference>
<dbReference type="GO" id="GO:0009229">
    <property type="term" value="P:thiamine diphosphate biosynthetic process"/>
    <property type="evidence" value="ECO:0007669"/>
    <property type="project" value="UniProtKB-UniRule"/>
</dbReference>
<dbReference type="CDD" id="cd01170">
    <property type="entry name" value="THZ_kinase"/>
    <property type="match status" value="1"/>
</dbReference>
<dbReference type="Gene3D" id="3.40.1190.20">
    <property type="match status" value="1"/>
</dbReference>
<dbReference type="HAMAP" id="MF_00228">
    <property type="entry name" value="Thz_kinase"/>
    <property type="match status" value="1"/>
</dbReference>
<dbReference type="InterPro" id="IPR000417">
    <property type="entry name" value="Hyethyz_kinase"/>
</dbReference>
<dbReference type="InterPro" id="IPR029056">
    <property type="entry name" value="Ribokinase-like"/>
</dbReference>
<dbReference type="Pfam" id="PF02110">
    <property type="entry name" value="HK"/>
    <property type="match status" value="1"/>
</dbReference>
<dbReference type="PIRSF" id="PIRSF000513">
    <property type="entry name" value="Thz_kinase"/>
    <property type="match status" value="1"/>
</dbReference>
<dbReference type="PRINTS" id="PR01099">
    <property type="entry name" value="HYETHTZKNASE"/>
</dbReference>
<dbReference type="SUPFAM" id="SSF53613">
    <property type="entry name" value="Ribokinase-like"/>
    <property type="match status" value="1"/>
</dbReference>
<comment type="function">
    <text evidence="1">Catalyzes the phosphorylation of the hydroxyl group of 4-methyl-5-beta-hydroxyethylthiazole (THZ).</text>
</comment>
<comment type="catalytic activity">
    <reaction evidence="1">
        <text>5-(2-hydroxyethyl)-4-methylthiazole + ATP = 4-methyl-5-(2-phosphooxyethyl)-thiazole + ADP + H(+)</text>
        <dbReference type="Rhea" id="RHEA:24212"/>
        <dbReference type="ChEBI" id="CHEBI:15378"/>
        <dbReference type="ChEBI" id="CHEBI:17957"/>
        <dbReference type="ChEBI" id="CHEBI:30616"/>
        <dbReference type="ChEBI" id="CHEBI:58296"/>
        <dbReference type="ChEBI" id="CHEBI:456216"/>
        <dbReference type="EC" id="2.7.1.50"/>
    </reaction>
</comment>
<comment type="cofactor">
    <cofactor evidence="1">
        <name>Mg(2+)</name>
        <dbReference type="ChEBI" id="CHEBI:18420"/>
    </cofactor>
</comment>
<comment type="pathway">
    <text evidence="1">Cofactor biosynthesis; thiamine diphosphate biosynthesis; 4-methyl-5-(2-phosphoethyl)-thiazole from 5-(2-hydroxyethyl)-4-methylthiazole: step 1/1.</text>
</comment>
<comment type="similarity">
    <text evidence="1">Belongs to the Thz kinase family.</text>
</comment>
<keyword id="KW-0067">ATP-binding</keyword>
<keyword id="KW-0418">Kinase</keyword>
<keyword id="KW-0460">Magnesium</keyword>
<keyword id="KW-0479">Metal-binding</keyword>
<keyword id="KW-0547">Nucleotide-binding</keyword>
<keyword id="KW-0784">Thiamine biosynthesis</keyword>
<keyword id="KW-0808">Transferase</keyword>
<proteinExistence type="inferred from homology"/>
<protein>
    <recommendedName>
        <fullName evidence="1">Hydroxyethylthiazole kinase 2</fullName>
        <ecNumber evidence="1">2.7.1.50</ecNumber>
    </recommendedName>
    <alternativeName>
        <fullName evidence="1">4-methyl-5-beta-hydroxyethylthiazole kinase 2</fullName>
        <shortName evidence="1">TH kinase 2</shortName>
        <shortName evidence="1">Thz kinase 2</shortName>
    </alternativeName>
</protein>
<gene>
    <name evidence="1" type="primary">thiM2</name>
    <name type="ordered locus">SPJ_0664</name>
</gene>
<name>THIM2_STRZJ</name>